<protein>
    <recommendedName>
        <fullName>Glutamine--tRNA ligase</fullName>
        <ecNumber evidence="2">6.1.1.18</ecNumber>
    </recommendedName>
    <alternativeName>
        <fullName>Glutaminyl-tRNA synthetase</fullName>
        <shortName>GlnRS</shortName>
    </alternativeName>
</protein>
<organism>
    <name type="scientific">Lupinus luteus</name>
    <name type="common">European yellow lupine</name>
    <dbReference type="NCBI Taxonomy" id="3873"/>
    <lineage>
        <taxon>Eukaryota</taxon>
        <taxon>Viridiplantae</taxon>
        <taxon>Streptophyta</taxon>
        <taxon>Embryophyta</taxon>
        <taxon>Tracheophyta</taxon>
        <taxon>Spermatophyta</taxon>
        <taxon>Magnoliopsida</taxon>
        <taxon>eudicotyledons</taxon>
        <taxon>Gunneridae</taxon>
        <taxon>Pentapetalae</taxon>
        <taxon>rosids</taxon>
        <taxon>fabids</taxon>
        <taxon>Fabales</taxon>
        <taxon>Fabaceae</taxon>
        <taxon>Papilionoideae</taxon>
        <taxon>50 kb inversion clade</taxon>
        <taxon>genistoids sensu lato</taxon>
        <taxon>core genistoids</taxon>
        <taxon>Genisteae</taxon>
        <taxon>Lupinus</taxon>
    </lineage>
</organism>
<keyword id="KW-0030">Aminoacyl-tRNA synthetase</keyword>
<keyword id="KW-0067">ATP-binding</keyword>
<keyword id="KW-0436">Ligase</keyword>
<keyword id="KW-0547">Nucleotide-binding</keyword>
<keyword id="KW-0648">Protein biosynthesis</keyword>
<comment type="catalytic activity">
    <reaction evidence="2">
        <text>tRNA(Gln) + L-glutamine + ATP = L-glutaminyl-tRNA(Gln) + AMP + diphosphate</text>
        <dbReference type="Rhea" id="RHEA:20121"/>
        <dbReference type="Rhea" id="RHEA-COMP:9662"/>
        <dbReference type="Rhea" id="RHEA-COMP:9681"/>
        <dbReference type="ChEBI" id="CHEBI:30616"/>
        <dbReference type="ChEBI" id="CHEBI:33019"/>
        <dbReference type="ChEBI" id="CHEBI:58359"/>
        <dbReference type="ChEBI" id="CHEBI:78442"/>
        <dbReference type="ChEBI" id="CHEBI:78521"/>
        <dbReference type="ChEBI" id="CHEBI:456215"/>
        <dbReference type="EC" id="6.1.1.18"/>
    </reaction>
</comment>
<comment type="similarity">
    <text evidence="4">Belongs to the class-I aminoacyl-tRNA synthetase family.</text>
</comment>
<reference key="1">
    <citation type="online journal article" date="1995" name="Plant Gene Register">
        <title>Isolation and characterization of a cDNA clone encoding a plant gene of aminoacyl-tRNA synthetase.</title>
        <authorList>
            <person name="Siatecka M."/>
            <person name="Rozek M."/>
            <person name="Barciszewski J."/>
        </authorList>
        <locator>PGR95-103</locator>
    </citation>
    <scope>NUCLEOTIDE SEQUENCE [MRNA]</scope>
    <source>
        <strain>cv. Ventus</strain>
    </source>
</reference>
<name>SYQ_LUPLU</name>
<proteinExistence type="evidence at transcript level"/>
<evidence type="ECO:0000250" key="1">
    <source>
        <dbReference type="UniProtKB" id="P00962"/>
    </source>
</evidence>
<evidence type="ECO:0000250" key="2">
    <source>
        <dbReference type="UniProtKB" id="P47897"/>
    </source>
</evidence>
<evidence type="ECO:0000256" key="3">
    <source>
        <dbReference type="SAM" id="MobiDB-lite"/>
    </source>
</evidence>
<evidence type="ECO:0000305" key="4"/>
<feature type="chain" id="PRO_0000195864" description="Glutamine--tRNA ligase">
    <location>
        <begin position="1"/>
        <end position="794"/>
    </location>
</feature>
<feature type="region of interest" description="Disordered" evidence="3">
    <location>
        <begin position="192"/>
        <end position="217"/>
    </location>
</feature>
<feature type="short sequence motif" description="'HIGH' region">
    <location>
        <begin position="277"/>
        <end position="287"/>
    </location>
</feature>
<feature type="short sequence motif" description="'KMSKS' region">
    <location>
        <begin position="505"/>
        <end position="509"/>
    </location>
</feature>
<feature type="binding site" evidence="1">
    <location>
        <begin position="278"/>
        <end position="280"/>
    </location>
    <ligand>
        <name>ATP</name>
        <dbReference type="ChEBI" id="CHEBI:30616"/>
    </ligand>
</feature>
<feature type="binding site" evidence="1">
    <location>
        <begin position="284"/>
        <end position="290"/>
    </location>
    <ligand>
        <name>ATP</name>
        <dbReference type="ChEBI" id="CHEBI:30616"/>
    </ligand>
</feature>
<feature type="binding site" evidence="1">
    <location>
        <position position="310"/>
    </location>
    <ligand>
        <name>L-glutamine</name>
        <dbReference type="ChEBI" id="CHEBI:58359"/>
    </ligand>
</feature>
<feature type="binding site" evidence="1">
    <location>
        <position position="450"/>
    </location>
    <ligand>
        <name>L-glutamine</name>
        <dbReference type="ChEBI" id="CHEBI:58359"/>
    </ligand>
</feature>
<feature type="binding site" evidence="1">
    <location>
        <position position="469"/>
    </location>
    <ligand>
        <name>ATP</name>
        <dbReference type="ChEBI" id="CHEBI:30616"/>
    </ligand>
</feature>
<feature type="binding site" evidence="1">
    <location>
        <begin position="498"/>
        <end position="499"/>
    </location>
    <ligand>
        <name>ATP</name>
        <dbReference type="ChEBI" id="CHEBI:30616"/>
    </ligand>
</feature>
<feature type="binding site" evidence="1">
    <location>
        <begin position="506"/>
        <end position="508"/>
    </location>
    <ligand>
        <name>ATP</name>
        <dbReference type="ChEBI" id="CHEBI:30616"/>
    </ligand>
</feature>
<dbReference type="EC" id="6.1.1.18" evidence="2"/>
<dbReference type="EMBL" id="X91787">
    <property type="protein sequence ID" value="CAA62901.1"/>
    <property type="molecule type" value="mRNA"/>
</dbReference>
<dbReference type="PIR" id="T09643">
    <property type="entry name" value="T09643"/>
</dbReference>
<dbReference type="SMR" id="P52780"/>
<dbReference type="GO" id="GO:0005829">
    <property type="term" value="C:cytosol"/>
    <property type="evidence" value="ECO:0007669"/>
    <property type="project" value="TreeGrafter"/>
</dbReference>
<dbReference type="GO" id="GO:0005524">
    <property type="term" value="F:ATP binding"/>
    <property type="evidence" value="ECO:0007669"/>
    <property type="project" value="UniProtKB-KW"/>
</dbReference>
<dbReference type="GO" id="GO:0004819">
    <property type="term" value="F:glutamine-tRNA ligase activity"/>
    <property type="evidence" value="ECO:0007669"/>
    <property type="project" value="UniProtKB-EC"/>
</dbReference>
<dbReference type="GO" id="GO:0006425">
    <property type="term" value="P:glutaminyl-tRNA aminoacylation"/>
    <property type="evidence" value="ECO:0007669"/>
    <property type="project" value="InterPro"/>
</dbReference>
<dbReference type="GO" id="GO:0009791">
    <property type="term" value="P:post-embryonic development"/>
    <property type="evidence" value="ECO:0007669"/>
    <property type="project" value="UniProtKB-ARBA"/>
</dbReference>
<dbReference type="GO" id="GO:0048608">
    <property type="term" value="P:reproductive structure development"/>
    <property type="evidence" value="ECO:0007669"/>
    <property type="project" value="UniProtKB-ARBA"/>
</dbReference>
<dbReference type="CDD" id="cd00807">
    <property type="entry name" value="GlnRS_core"/>
    <property type="match status" value="1"/>
</dbReference>
<dbReference type="FunFam" id="1.10.1160.10:FF:000001">
    <property type="entry name" value="Glutamine--tRNA ligase"/>
    <property type="match status" value="1"/>
</dbReference>
<dbReference type="FunFam" id="2.40.240.10:FF:000007">
    <property type="entry name" value="Glutamine--tRNA ligase"/>
    <property type="match status" value="1"/>
</dbReference>
<dbReference type="FunFam" id="3.90.800.10:FF:000001">
    <property type="entry name" value="Glutamine--tRNA ligase"/>
    <property type="match status" value="1"/>
</dbReference>
<dbReference type="FunFam" id="1.10.10.2420:FF:000001">
    <property type="entry name" value="Glutamine--tRNA ligase cytoplasmic"/>
    <property type="match status" value="1"/>
</dbReference>
<dbReference type="FunFam" id="1.10.8.1290:FF:000002">
    <property type="entry name" value="Glutamine--tRNA ligase cytoplasmic"/>
    <property type="match status" value="1"/>
</dbReference>
<dbReference type="FunFam" id="2.40.240.10:FF:000011">
    <property type="entry name" value="Glutamine--tRNA ligase cytoplasmic"/>
    <property type="match status" value="1"/>
</dbReference>
<dbReference type="FunFam" id="3.40.50.620:FF:000037">
    <property type="entry name" value="Glutamine--tRNA ligase cytoplasmic"/>
    <property type="match status" value="1"/>
</dbReference>
<dbReference type="Gene3D" id="1.10.10.2420">
    <property type="match status" value="1"/>
</dbReference>
<dbReference type="Gene3D" id="1.10.8.1290">
    <property type="entry name" value="Glutaminyl-tRNA synthetase, non-specific RNA binding region part 1, domain 1"/>
    <property type="match status" value="1"/>
</dbReference>
<dbReference type="Gene3D" id="3.40.50.620">
    <property type="entry name" value="HUPs"/>
    <property type="match status" value="1"/>
</dbReference>
<dbReference type="Gene3D" id="2.40.240.10">
    <property type="entry name" value="Ribosomal Protein L25, Chain P"/>
    <property type="match status" value="2"/>
</dbReference>
<dbReference type="InterPro" id="IPR001412">
    <property type="entry name" value="aa-tRNA-synth_I_CS"/>
</dbReference>
<dbReference type="InterPro" id="IPR004514">
    <property type="entry name" value="Gln-tRNA-synth"/>
</dbReference>
<dbReference type="InterPro" id="IPR007638">
    <property type="entry name" value="Gln-tRNA-synth_Ib_RNA-bd_2"/>
</dbReference>
<dbReference type="InterPro" id="IPR007639">
    <property type="entry name" value="Gln-tRNA-synth_Ib_RNA-bd_N"/>
</dbReference>
<dbReference type="InterPro" id="IPR042558">
    <property type="entry name" value="Gln-tRNA-synth_Ib_RNA-bd_N_1"/>
</dbReference>
<dbReference type="InterPro" id="IPR042559">
    <property type="entry name" value="Gln-tRNA-synth_Ib_RNA-bd_N_2"/>
</dbReference>
<dbReference type="InterPro" id="IPR050132">
    <property type="entry name" value="Gln/Glu-tRNA_Ligase"/>
</dbReference>
<dbReference type="InterPro" id="IPR000924">
    <property type="entry name" value="Glu/Gln-tRNA-synth"/>
</dbReference>
<dbReference type="InterPro" id="IPR020058">
    <property type="entry name" value="Glu/Gln-tRNA-synth_Ib_cat-dom"/>
</dbReference>
<dbReference type="InterPro" id="IPR020059">
    <property type="entry name" value="Glu/Gln-tRNA-synth_Ib_codon-bd"/>
</dbReference>
<dbReference type="InterPro" id="IPR020056">
    <property type="entry name" value="Rbsml_bL25/Gln-tRNA_synth_N"/>
</dbReference>
<dbReference type="InterPro" id="IPR011035">
    <property type="entry name" value="Ribosomal_bL25/Gln-tRNA_synth"/>
</dbReference>
<dbReference type="InterPro" id="IPR014729">
    <property type="entry name" value="Rossmann-like_a/b/a_fold"/>
</dbReference>
<dbReference type="InterPro" id="IPR049437">
    <property type="entry name" value="tRNA-synt_1c_C2"/>
</dbReference>
<dbReference type="NCBIfam" id="TIGR00440">
    <property type="entry name" value="glnS"/>
    <property type="match status" value="1"/>
</dbReference>
<dbReference type="PANTHER" id="PTHR43097:SF4">
    <property type="entry name" value="GLUTAMINE--TRNA LIGASE"/>
    <property type="match status" value="1"/>
</dbReference>
<dbReference type="PANTHER" id="PTHR43097">
    <property type="entry name" value="GLUTAMINE-TRNA LIGASE"/>
    <property type="match status" value="1"/>
</dbReference>
<dbReference type="Pfam" id="PF00749">
    <property type="entry name" value="tRNA-synt_1c"/>
    <property type="match status" value="1"/>
</dbReference>
<dbReference type="Pfam" id="PF03950">
    <property type="entry name" value="tRNA-synt_1c_C"/>
    <property type="match status" value="1"/>
</dbReference>
<dbReference type="Pfam" id="PF20974">
    <property type="entry name" value="tRNA-synt_1c_C2"/>
    <property type="match status" value="1"/>
</dbReference>
<dbReference type="Pfam" id="PF04558">
    <property type="entry name" value="tRNA_synt_1c_R1"/>
    <property type="match status" value="1"/>
</dbReference>
<dbReference type="Pfam" id="PF04557">
    <property type="entry name" value="tRNA_synt_1c_R2"/>
    <property type="match status" value="1"/>
</dbReference>
<dbReference type="PRINTS" id="PR00987">
    <property type="entry name" value="TRNASYNTHGLU"/>
</dbReference>
<dbReference type="SUPFAM" id="SSF52374">
    <property type="entry name" value="Nucleotidylyl transferase"/>
    <property type="match status" value="1"/>
</dbReference>
<dbReference type="SUPFAM" id="SSF50715">
    <property type="entry name" value="Ribosomal protein L25-like"/>
    <property type="match status" value="1"/>
</dbReference>
<dbReference type="PROSITE" id="PS00178">
    <property type="entry name" value="AA_TRNA_LIGASE_I"/>
    <property type="match status" value="1"/>
</dbReference>
<accession>P52780</accession>
<sequence>MPAKDDTSSDKEKSLELFLKIGLDERTAKNTVANNKVTTNLTSVINDAGVTDGCSRTVGNLLYTVATKYPANALPHRPTLLQYIVNSKVKTTAQLDAALSFLSATGSENLDLNKFEEACGVGVEVSTEDIKHAVDEVVEENKATILELRYRVNVGELLGHVRKRLPWADAKVVKQLVDAKLYEILGDRTAADNEKPKKKKEKPAKVEDKAAPVATSEKPLEEDLNPYLIFPNPEDNFKVHTEVPFSDGNILRCCNTKALLEKHLKATGGKVLTRFPPEPNGYLHIGHAKAMFVDFGLAKDRNGGCYLRFDDTNPEAEKKEYIDHIEEIVQWMGWEPFKITYTSNYFQELYEFAVELIRRGHAYVDHQTADEIKEYREKKLNSPWRDRPISESLKLFEDMRRGFIEEGKATLRMKQDMQSDNYNMYDLIAYRIKFTPHPHAGDKWCIYPSYDYAHCIVDSIENVTHSLCTLEFETRRASYYWLLHALGIYQPYVWEYSRLNVSNTVMSKRKLNRLVTEKWVDGWDDPRLMTLAGLRRRGMTPTAINAFVRGMGITRSDGTLISVERLEYHVREELNKTAPRAMVVLHPLKVVITNLEAKSAIEVDAKKWPDAQADDASAFYKIPFSNVVYIERSDFRMQDSKDYYGLAPGKSVILRYAFPIKCTEVILADDNETILEIRAEYDPSKKTKPKGVLHWVSQPSPGVDPLKVEVRLFERLFLSENPAELDNWLGDLNPHSKVEISNAYGVSLLKDAKLGDRFQFERLGYFAVDQDSTPEKLVFNRTVTLKDSYGKGGK</sequence>